<gene>
    <name evidence="1" type="primary">tilS</name>
    <name type="ordered locus">HP_0728</name>
</gene>
<protein>
    <recommendedName>
        <fullName evidence="1">tRNA(Ile)-lysidine synthase</fullName>
        <ecNumber evidence="1">6.3.4.19</ecNumber>
    </recommendedName>
    <alternativeName>
        <fullName evidence="1">tRNA(Ile)-2-lysyl-cytidine synthase</fullName>
    </alternativeName>
    <alternativeName>
        <fullName evidence="1">tRNA(Ile)-lysidine synthetase</fullName>
    </alternativeName>
</protein>
<comment type="function">
    <text evidence="1">Ligates lysine onto the cytidine present at position 34 of the AUA codon-specific tRNA(Ile) that contains the anticodon CAU, in an ATP-dependent manner. Cytidine is converted to lysidine, thus changing the amino acid specificity of the tRNA from methionine to isoleucine.</text>
</comment>
<comment type="catalytic activity">
    <reaction evidence="1">
        <text>cytidine(34) in tRNA(Ile2) + L-lysine + ATP = lysidine(34) in tRNA(Ile2) + AMP + diphosphate + H(+)</text>
        <dbReference type="Rhea" id="RHEA:43744"/>
        <dbReference type="Rhea" id="RHEA-COMP:10625"/>
        <dbReference type="Rhea" id="RHEA-COMP:10670"/>
        <dbReference type="ChEBI" id="CHEBI:15378"/>
        <dbReference type="ChEBI" id="CHEBI:30616"/>
        <dbReference type="ChEBI" id="CHEBI:32551"/>
        <dbReference type="ChEBI" id="CHEBI:33019"/>
        <dbReference type="ChEBI" id="CHEBI:82748"/>
        <dbReference type="ChEBI" id="CHEBI:83665"/>
        <dbReference type="ChEBI" id="CHEBI:456215"/>
        <dbReference type="EC" id="6.3.4.19"/>
    </reaction>
</comment>
<comment type="subcellular location">
    <subcellularLocation>
        <location evidence="1">Cytoplasm</location>
    </subcellularLocation>
</comment>
<comment type="domain">
    <text>The N-terminal region contains the highly conserved SGGXDS motif, predicted to be a P-loop motif involved in ATP binding.</text>
</comment>
<comment type="similarity">
    <text evidence="1">Belongs to the tRNA(Ile)-lysidine synthase family.</text>
</comment>
<name>TILS_HELPY</name>
<accession>O25428</accession>
<organism>
    <name type="scientific">Helicobacter pylori (strain ATCC 700392 / 26695)</name>
    <name type="common">Campylobacter pylori</name>
    <dbReference type="NCBI Taxonomy" id="85962"/>
    <lineage>
        <taxon>Bacteria</taxon>
        <taxon>Pseudomonadati</taxon>
        <taxon>Campylobacterota</taxon>
        <taxon>Epsilonproteobacteria</taxon>
        <taxon>Campylobacterales</taxon>
        <taxon>Helicobacteraceae</taxon>
        <taxon>Helicobacter</taxon>
    </lineage>
</organism>
<feature type="chain" id="PRO_0000181705" description="tRNA(Ile)-lysidine synthase">
    <location>
        <begin position="1"/>
        <end position="336"/>
    </location>
</feature>
<feature type="binding site" evidence="1">
    <location>
        <begin position="21"/>
        <end position="26"/>
    </location>
    <ligand>
        <name>ATP</name>
        <dbReference type="ChEBI" id="CHEBI:30616"/>
    </ligand>
</feature>
<proteinExistence type="inferred from homology"/>
<evidence type="ECO:0000255" key="1">
    <source>
        <dbReference type="HAMAP-Rule" id="MF_01161"/>
    </source>
</evidence>
<dbReference type="EC" id="6.3.4.19" evidence="1"/>
<dbReference type="EMBL" id="AE000511">
    <property type="protein sequence ID" value="AAD07779.1"/>
    <property type="molecule type" value="Genomic_DNA"/>
</dbReference>
<dbReference type="PIR" id="H64610">
    <property type="entry name" value="H64610"/>
</dbReference>
<dbReference type="RefSeq" id="NP_207522.1">
    <property type="nucleotide sequence ID" value="NC_000915.1"/>
</dbReference>
<dbReference type="SMR" id="O25428"/>
<dbReference type="STRING" id="85962.HP_0728"/>
<dbReference type="PaxDb" id="85962-C694_03745"/>
<dbReference type="EnsemblBacteria" id="AAD07779">
    <property type="protein sequence ID" value="AAD07779"/>
    <property type="gene ID" value="HP_0728"/>
</dbReference>
<dbReference type="KEGG" id="hpy:HP_0728"/>
<dbReference type="PATRIC" id="fig|85962.8.peg.760"/>
<dbReference type="eggNOG" id="COG0037">
    <property type="taxonomic scope" value="Bacteria"/>
</dbReference>
<dbReference type="InParanoid" id="O25428"/>
<dbReference type="OrthoDB" id="5289653at2"/>
<dbReference type="PhylomeDB" id="O25428"/>
<dbReference type="Proteomes" id="UP000000429">
    <property type="component" value="Chromosome"/>
</dbReference>
<dbReference type="GO" id="GO:0005737">
    <property type="term" value="C:cytoplasm"/>
    <property type="evidence" value="ECO:0007669"/>
    <property type="project" value="UniProtKB-SubCell"/>
</dbReference>
<dbReference type="GO" id="GO:0005524">
    <property type="term" value="F:ATP binding"/>
    <property type="evidence" value="ECO:0007669"/>
    <property type="project" value="UniProtKB-UniRule"/>
</dbReference>
<dbReference type="GO" id="GO:0032267">
    <property type="term" value="F:tRNA(Ile)-lysidine synthase activity"/>
    <property type="evidence" value="ECO:0007669"/>
    <property type="project" value="UniProtKB-EC"/>
</dbReference>
<dbReference type="GO" id="GO:0006400">
    <property type="term" value="P:tRNA modification"/>
    <property type="evidence" value="ECO:0007669"/>
    <property type="project" value="UniProtKB-UniRule"/>
</dbReference>
<dbReference type="CDD" id="cd01992">
    <property type="entry name" value="TilS_N"/>
    <property type="match status" value="1"/>
</dbReference>
<dbReference type="Gene3D" id="3.40.50.620">
    <property type="entry name" value="HUPs"/>
    <property type="match status" value="1"/>
</dbReference>
<dbReference type="HAMAP" id="MF_01161">
    <property type="entry name" value="tRNA_Ile_lys_synt"/>
    <property type="match status" value="1"/>
</dbReference>
<dbReference type="InterPro" id="IPR014729">
    <property type="entry name" value="Rossmann-like_a/b/a_fold"/>
</dbReference>
<dbReference type="InterPro" id="IPR011063">
    <property type="entry name" value="TilS/TtcA_N"/>
</dbReference>
<dbReference type="InterPro" id="IPR012094">
    <property type="entry name" value="tRNA_Ile_lys_synt"/>
</dbReference>
<dbReference type="InterPro" id="IPR012795">
    <property type="entry name" value="tRNA_Ile_lys_synt_N"/>
</dbReference>
<dbReference type="NCBIfam" id="TIGR02432">
    <property type="entry name" value="lysidine_TilS_N"/>
    <property type="match status" value="1"/>
</dbReference>
<dbReference type="PANTHER" id="PTHR43033">
    <property type="entry name" value="TRNA(ILE)-LYSIDINE SYNTHASE-RELATED"/>
    <property type="match status" value="1"/>
</dbReference>
<dbReference type="PANTHER" id="PTHR43033:SF1">
    <property type="entry name" value="TRNA(ILE)-LYSIDINE SYNTHASE-RELATED"/>
    <property type="match status" value="1"/>
</dbReference>
<dbReference type="Pfam" id="PF01171">
    <property type="entry name" value="ATP_bind_3"/>
    <property type="match status" value="1"/>
</dbReference>
<dbReference type="SUPFAM" id="SSF52402">
    <property type="entry name" value="Adenine nucleotide alpha hydrolases-like"/>
    <property type="match status" value="1"/>
</dbReference>
<reference key="1">
    <citation type="journal article" date="1997" name="Nature">
        <title>The complete genome sequence of the gastric pathogen Helicobacter pylori.</title>
        <authorList>
            <person name="Tomb J.-F."/>
            <person name="White O."/>
            <person name="Kerlavage A.R."/>
            <person name="Clayton R.A."/>
            <person name="Sutton G.G."/>
            <person name="Fleischmann R.D."/>
            <person name="Ketchum K.A."/>
            <person name="Klenk H.-P."/>
            <person name="Gill S.R."/>
            <person name="Dougherty B.A."/>
            <person name="Nelson K.E."/>
            <person name="Quackenbush J."/>
            <person name="Zhou L."/>
            <person name="Kirkness E.F."/>
            <person name="Peterson S.N."/>
            <person name="Loftus B.J."/>
            <person name="Richardson D.L."/>
            <person name="Dodson R.J."/>
            <person name="Khalak H.G."/>
            <person name="Glodek A."/>
            <person name="McKenney K."/>
            <person name="FitzGerald L.M."/>
            <person name="Lee N."/>
            <person name="Adams M.D."/>
            <person name="Hickey E.K."/>
            <person name="Berg D.E."/>
            <person name="Gocayne J.D."/>
            <person name="Utterback T.R."/>
            <person name="Peterson J.D."/>
            <person name="Kelley J.M."/>
            <person name="Cotton M.D."/>
            <person name="Weidman J.F."/>
            <person name="Fujii C."/>
            <person name="Bowman C."/>
            <person name="Watthey L."/>
            <person name="Wallin E."/>
            <person name="Hayes W.S."/>
            <person name="Borodovsky M."/>
            <person name="Karp P.D."/>
            <person name="Smith H.O."/>
            <person name="Fraser C.M."/>
            <person name="Venter J.C."/>
        </authorList>
    </citation>
    <scope>NUCLEOTIDE SEQUENCE [LARGE SCALE GENOMIC DNA]</scope>
    <source>
        <strain>ATCC 700392 / 26695</strain>
    </source>
</reference>
<sequence length="336" mass="39763">MQDFKTHLEPLKEGKNLLGFSGGLDSTCLFFLLVGENIVFDIALVDYNTQKQRLEIIQHAQKLAKTHHKKCYIHHAPKIAHNFEMQARKIRYDFFETLIKEHSYKHLILAHHLNDRLEWFLMQLSKGAGLNTLLSFQAYEKRESYAIVRPLLYTPKDTLKTLAKDLKFFEDDSNSSLKFKRNCFRKNYANSLMQDYSKGIIQSFKFLDQEKERLYPLTIVSQMHGITFFKYSQNALFMVDKILKQKGYVLSFSQKEEIKRSFFSLEIAQKFIIESDKEHVFIALKPPKTLSMPKDFKDRARRLDIPKRLRPVLYAEFLKQPTHDFLTRFKQSLMDL</sequence>
<keyword id="KW-0067">ATP-binding</keyword>
<keyword id="KW-0963">Cytoplasm</keyword>
<keyword id="KW-0436">Ligase</keyword>
<keyword id="KW-0547">Nucleotide-binding</keyword>
<keyword id="KW-1185">Reference proteome</keyword>
<keyword id="KW-0819">tRNA processing</keyword>